<gene>
    <name type="ordered locus">Ent638_1085</name>
</gene>
<sequence>MPLPDFHSSDPFTLGIELELQVVNPPGYDLSQDSSALIAAVKNDIKAGEVKHDITESMLEIATGVCQNIDQAAAQFSAMQQAILRAAGDQHIQIAGGGTHPFQKWQRQEVCDDERYNHNLELFGYLILQATVFGQHVHVGCRNGDDAIYLLHGLSRFVPHFIALSASSPYMQGSDTKFASSRLNIFSGFPDNGKMPWVSNWQGFEGLFRRLSYTSMIDTIKDVHWDIRPSPHFGTVEVRVMDTPLTLAHAINIAGLIQATAHWLLTERPYKHQEQDYLLYKFNRFQACRYGLDGLLTDVNTGEQKTIAEDMKWLLDRVAPSAEKLGGASAIAEIALMLKQGKSEAQRMRDFIADGGSLISLVQKHCELWATHP</sequence>
<accession>A4W7T6</accession>
<keyword id="KW-0067">ATP-binding</keyword>
<keyword id="KW-0436">Ligase</keyword>
<keyword id="KW-0547">Nucleotide-binding</keyword>
<feature type="chain" id="PRO_1000069436" description="Putative glutamate--cysteine ligase 2">
    <location>
        <begin position="1"/>
        <end position="373"/>
    </location>
</feature>
<dbReference type="EC" id="6.3.2.2" evidence="1"/>
<dbReference type="EMBL" id="CP000653">
    <property type="protein sequence ID" value="ABP59766.1"/>
    <property type="molecule type" value="Genomic_DNA"/>
</dbReference>
<dbReference type="RefSeq" id="WP_012016486.1">
    <property type="nucleotide sequence ID" value="NC_009436.1"/>
</dbReference>
<dbReference type="SMR" id="A4W7T6"/>
<dbReference type="STRING" id="399742.Ent638_1085"/>
<dbReference type="KEGG" id="ent:Ent638_1085"/>
<dbReference type="eggNOG" id="COG2170">
    <property type="taxonomic scope" value="Bacteria"/>
</dbReference>
<dbReference type="HOGENOM" id="CLU_044848_1_1_6"/>
<dbReference type="OrthoDB" id="9769628at2"/>
<dbReference type="Proteomes" id="UP000000230">
    <property type="component" value="Chromosome"/>
</dbReference>
<dbReference type="GO" id="GO:0005524">
    <property type="term" value="F:ATP binding"/>
    <property type="evidence" value="ECO:0007669"/>
    <property type="project" value="UniProtKB-KW"/>
</dbReference>
<dbReference type="GO" id="GO:0004357">
    <property type="term" value="F:glutamate-cysteine ligase activity"/>
    <property type="evidence" value="ECO:0007669"/>
    <property type="project" value="UniProtKB-EC"/>
</dbReference>
<dbReference type="GO" id="GO:0042398">
    <property type="term" value="P:modified amino acid biosynthetic process"/>
    <property type="evidence" value="ECO:0007669"/>
    <property type="project" value="InterPro"/>
</dbReference>
<dbReference type="Gene3D" id="3.30.590.20">
    <property type="match status" value="1"/>
</dbReference>
<dbReference type="HAMAP" id="MF_01609">
    <property type="entry name" value="Glu_cys_ligase_2"/>
    <property type="match status" value="1"/>
</dbReference>
<dbReference type="InterPro" id="IPR050141">
    <property type="entry name" value="GCL_type2/YbdK_subfam"/>
</dbReference>
<dbReference type="InterPro" id="IPR006336">
    <property type="entry name" value="GCS2"/>
</dbReference>
<dbReference type="InterPro" id="IPR014746">
    <property type="entry name" value="Gln_synth/guanido_kin_cat_dom"/>
</dbReference>
<dbReference type="InterPro" id="IPR011793">
    <property type="entry name" value="YbdK"/>
</dbReference>
<dbReference type="NCBIfam" id="TIGR02050">
    <property type="entry name" value="gshA_cyan_rel"/>
    <property type="match status" value="1"/>
</dbReference>
<dbReference type="NCBIfam" id="NF010040">
    <property type="entry name" value="PRK13516.1"/>
    <property type="match status" value="1"/>
</dbReference>
<dbReference type="PANTHER" id="PTHR36510">
    <property type="entry name" value="GLUTAMATE--CYSTEINE LIGASE 2-RELATED"/>
    <property type="match status" value="1"/>
</dbReference>
<dbReference type="PANTHER" id="PTHR36510:SF1">
    <property type="entry name" value="GLUTAMATE--CYSTEINE LIGASE 2-RELATED"/>
    <property type="match status" value="1"/>
</dbReference>
<dbReference type="Pfam" id="PF04107">
    <property type="entry name" value="GCS2"/>
    <property type="match status" value="1"/>
</dbReference>
<dbReference type="SUPFAM" id="SSF55931">
    <property type="entry name" value="Glutamine synthetase/guanido kinase"/>
    <property type="match status" value="1"/>
</dbReference>
<comment type="function">
    <text evidence="1">ATP-dependent carboxylate-amine ligase which exhibits weak glutamate--cysteine ligase activity.</text>
</comment>
<comment type="catalytic activity">
    <reaction evidence="1">
        <text>L-cysteine + L-glutamate + ATP = gamma-L-glutamyl-L-cysteine + ADP + phosphate + H(+)</text>
        <dbReference type="Rhea" id="RHEA:13285"/>
        <dbReference type="ChEBI" id="CHEBI:15378"/>
        <dbReference type="ChEBI" id="CHEBI:29985"/>
        <dbReference type="ChEBI" id="CHEBI:30616"/>
        <dbReference type="ChEBI" id="CHEBI:35235"/>
        <dbReference type="ChEBI" id="CHEBI:43474"/>
        <dbReference type="ChEBI" id="CHEBI:58173"/>
        <dbReference type="ChEBI" id="CHEBI:456216"/>
        <dbReference type="EC" id="6.3.2.2"/>
    </reaction>
</comment>
<comment type="subunit">
    <text evidence="1">Homodimer.</text>
</comment>
<comment type="similarity">
    <text evidence="1">Belongs to the glutamate--cysteine ligase type 2 family. YbdK subfamily.</text>
</comment>
<protein>
    <recommendedName>
        <fullName evidence="1">Putative glutamate--cysteine ligase 2</fullName>
        <ecNumber evidence="1">6.3.2.2</ecNumber>
    </recommendedName>
    <alternativeName>
        <fullName evidence="1">Gamma-glutamylcysteine synthetase 2</fullName>
        <shortName evidence="1">GCS 2</shortName>
        <shortName evidence="1">Gamma-GCS 2</shortName>
    </alternativeName>
</protein>
<proteinExistence type="inferred from homology"/>
<reference key="1">
    <citation type="journal article" date="2010" name="PLoS Genet.">
        <title>Genome sequence of the plant growth promoting endophytic bacterium Enterobacter sp. 638.</title>
        <authorList>
            <person name="Taghavi S."/>
            <person name="van der Lelie D."/>
            <person name="Hoffman A."/>
            <person name="Zhang Y.B."/>
            <person name="Walla M.D."/>
            <person name="Vangronsveld J."/>
            <person name="Newman L."/>
            <person name="Monchy S."/>
        </authorList>
    </citation>
    <scope>NUCLEOTIDE SEQUENCE [LARGE SCALE GENOMIC DNA]</scope>
    <source>
        <strain>638</strain>
    </source>
</reference>
<organism>
    <name type="scientific">Enterobacter sp. (strain 638)</name>
    <dbReference type="NCBI Taxonomy" id="399742"/>
    <lineage>
        <taxon>Bacteria</taxon>
        <taxon>Pseudomonadati</taxon>
        <taxon>Pseudomonadota</taxon>
        <taxon>Gammaproteobacteria</taxon>
        <taxon>Enterobacterales</taxon>
        <taxon>Enterobacteriaceae</taxon>
        <taxon>Enterobacter</taxon>
    </lineage>
</organism>
<evidence type="ECO:0000255" key="1">
    <source>
        <dbReference type="HAMAP-Rule" id="MF_01609"/>
    </source>
</evidence>
<name>GCS2_ENT38</name>